<comment type="function">
    <text evidence="1">Usually encoded in the trnK tRNA gene intron. Probably assists in splicing its own and other chloroplast group II introns.</text>
</comment>
<comment type="subcellular location">
    <subcellularLocation>
        <location>Plastid</location>
        <location>Chloroplast</location>
    </subcellularLocation>
</comment>
<comment type="similarity">
    <text evidence="1">Belongs to the intron maturase 2 family. MatK subfamily.</text>
</comment>
<name>MATK_NEPDI</name>
<evidence type="ECO:0000255" key="1">
    <source>
        <dbReference type="HAMAP-Rule" id="MF_01390"/>
    </source>
</evidence>
<feature type="chain" id="PRO_0000143532" description="Maturase K">
    <location>
        <begin position="1"/>
        <end position="504"/>
    </location>
</feature>
<gene>
    <name evidence="1" type="primary">matK</name>
</gene>
<proteinExistence type="inferred from homology"/>
<dbReference type="EMBL" id="AF315886">
    <property type="protein sequence ID" value="AAK56017.1"/>
    <property type="molecule type" value="Genomic_DNA"/>
</dbReference>
<dbReference type="GO" id="GO:0009507">
    <property type="term" value="C:chloroplast"/>
    <property type="evidence" value="ECO:0007669"/>
    <property type="project" value="UniProtKB-SubCell"/>
</dbReference>
<dbReference type="GO" id="GO:0003723">
    <property type="term" value="F:RNA binding"/>
    <property type="evidence" value="ECO:0007669"/>
    <property type="project" value="UniProtKB-KW"/>
</dbReference>
<dbReference type="GO" id="GO:0006397">
    <property type="term" value="P:mRNA processing"/>
    <property type="evidence" value="ECO:0007669"/>
    <property type="project" value="UniProtKB-KW"/>
</dbReference>
<dbReference type="GO" id="GO:0008380">
    <property type="term" value="P:RNA splicing"/>
    <property type="evidence" value="ECO:0007669"/>
    <property type="project" value="UniProtKB-UniRule"/>
</dbReference>
<dbReference type="GO" id="GO:0008033">
    <property type="term" value="P:tRNA processing"/>
    <property type="evidence" value="ECO:0007669"/>
    <property type="project" value="UniProtKB-KW"/>
</dbReference>
<dbReference type="HAMAP" id="MF_01390">
    <property type="entry name" value="MatK"/>
    <property type="match status" value="1"/>
</dbReference>
<dbReference type="InterPro" id="IPR024937">
    <property type="entry name" value="Domain_X"/>
</dbReference>
<dbReference type="InterPro" id="IPR002866">
    <property type="entry name" value="Maturase_MatK"/>
</dbReference>
<dbReference type="InterPro" id="IPR024942">
    <property type="entry name" value="Maturase_MatK_N"/>
</dbReference>
<dbReference type="PANTHER" id="PTHR34811">
    <property type="entry name" value="MATURASE K"/>
    <property type="match status" value="1"/>
</dbReference>
<dbReference type="PANTHER" id="PTHR34811:SF1">
    <property type="entry name" value="MATURASE K"/>
    <property type="match status" value="1"/>
</dbReference>
<dbReference type="Pfam" id="PF01348">
    <property type="entry name" value="Intron_maturas2"/>
    <property type="match status" value="1"/>
</dbReference>
<dbReference type="Pfam" id="PF01824">
    <property type="entry name" value="MatK_N"/>
    <property type="match status" value="1"/>
</dbReference>
<keyword id="KW-0150">Chloroplast</keyword>
<keyword id="KW-0507">mRNA processing</keyword>
<keyword id="KW-0934">Plastid</keyword>
<keyword id="KW-0694">RNA-binding</keyword>
<keyword id="KW-0819">tRNA processing</keyword>
<reference key="1">
    <citation type="journal article" date="2001" name="Plant Biol.">
        <title>Molecular phylogeny of Nepenthaceae based on cladistic analysis of plastid trnK intron sequence data.</title>
        <authorList>
            <person name="Meimberg H."/>
            <person name="Dittrich P."/>
            <person name="Heubl G."/>
        </authorList>
    </citation>
    <scope>NUCLEOTIDE SEQUENCE [GENOMIC DNA]</scope>
</reference>
<organism>
    <name type="scientific">Nepenthes distillatoria</name>
    <name type="common">Pitcher plant</name>
    <dbReference type="NCBI Taxonomy" id="122309"/>
    <lineage>
        <taxon>Eukaryota</taxon>
        <taxon>Viridiplantae</taxon>
        <taxon>Streptophyta</taxon>
        <taxon>Embryophyta</taxon>
        <taxon>Tracheophyta</taxon>
        <taxon>Spermatophyta</taxon>
        <taxon>Magnoliopsida</taxon>
        <taxon>eudicotyledons</taxon>
        <taxon>Gunneridae</taxon>
        <taxon>Pentapetalae</taxon>
        <taxon>Caryophyllales</taxon>
        <taxon>Nepenthaceae</taxon>
        <taxon>Nepenthes</taxon>
    </lineage>
</organism>
<sequence length="504" mass="60660">MEELRGYLELDRSWQRDFLYTLILQEYIYSLAHDHGFNRTIFFENAGYEKKYSFLIVKRLITRMYQQNHLILSANDSNQNEFLGQKKNLYSQMISEGFAFIVEIPFSLQLLFSLEGKEIVKSRNLRSIHSIFPFLEDKFSHLNYVLDILIPHPVHLEILVQTIRYWTKDASSLHLLRFCLYEYRNWNSRISRKQYISFFSNRNQRLFLFLYNSHVCEYESIFIFLRNQPSHLRSTFSGAFLERIYFYEKIEHLVKVFTKNFQVILWFFKDTFMHYVRYQGKSFLASKGTSLLMIKWKYYLVNFWQCSFSVWSQPRRIYINXLXNHXLDFMXFLSSVRLNPSVVRIQMLEKSFIIDNAINTFDTRVPNIPMIGSFAKAKFCNIFGHPISKPVWAYLSDSDIIDRFGRICRSLSHYYSGSSRKKSLYRIKYILRLSCARTLARKHKSTVRTFLKRLGSEFLEEFFMEEEKVLSLILPRDSYTSQRLYRGRIWYLDIFCIHDLANHE</sequence>
<protein>
    <recommendedName>
        <fullName evidence="1">Maturase K</fullName>
    </recommendedName>
    <alternativeName>
        <fullName evidence="1">Intron maturase</fullName>
    </alternativeName>
</protein>
<geneLocation type="chloroplast"/>
<accession>Q95GT7</accession>